<protein>
    <recommendedName>
        <fullName evidence="2">Ranatuerin-7</fullName>
    </recommendedName>
    <alternativeName>
        <fullName evidence="3">Temporin</fullName>
    </alternativeName>
</protein>
<evidence type="ECO:0000269" key="1">
    <source>
    </source>
</evidence>
<evidence type="ECO:0000303" key="2">
    <source>
    </source>
</evidence>
<evidence type="ECO:0000305" key="3"/>
<evidence type="ECO:0000305" key="4">
    <source>
    </source>
</evidence>
<proteinExistence type="evidence at protein level"/>
<accession>P82822</accession>
<organism>
    <name type="scientific">Aquarana catesbeiana</name>
    <name type="common">American bullfrog</name>
    <name type="synonym">Rana catesbeiana</name>
    <dbReference type="NCBI Taxonomy" id="8400"/>
    <lineage>
        <taxon>Eukaryota</taxon>
        <taxon>Metazoa</taxon>
        <taxon>Chordata</taxon>
        <taxon>Craniata</taxon>
        <taxon>Vertebrata</taxon>
        <taxon>Euteleostomi</taxon>
        <taxon>Amphibia</taxon>
        <taxon>Batrachia</taxon>
        <taxon>Anura</taxon>
        <taxon>Neobatrachia</taxon>
        <taxon>Ranoidea</taxon>
        <taxon>Ranidae</taxon>
        <taxon>Aquarana</taxon>
    </lineage>
</organism>
<name>TP7_AQUCT</name>
<dbReference type="GO" id="GO:0005576">
    <property type="term" value="C:extracellular region"/>
    <property type="evidence" value="ECO:0007669"/>
    <property type="project" value="UniProtKB-SubCell"/>
</dbReference>
<dbReference type="GO" id="GO:0042742">
    <property type="term" value="P:defense response to bacterium"/>
    <property type="evidence" value="ECO:0007669"/>
    <property type="project" value="UniProtKB-KW"/>
</dbReference>
<feature type="peptide" id="PRO_0000043564" description="Ranatuerin-7" evidence="1">
    <location>
        <begin position="1"/>
        <end position="13"/>
    </location>
</feature>
<reference key="1">
    <citation type="journal article" date="1998" name="Biochem. Biophys. Res. Commun.">
        <title>Ranatuerins: antimicrobial peptides isolated from the skin of the American bullfrog, Rana catesbeiana.</title>
        <authorList>
            <person name="Goraya J."/>
            <person name="Knoop F.C."/>
            <person name="Conlon J.M."/>
        </authorList>
    </citation>
    <scope>PROTEIN SEQUENCE</scope>
    <scope>FUNCTION</scope>
    <scope>SUBCELLULAR LOCATION</scope>
    <source>
        <tissue>Skin secretion</tissue>
    </source>
</reference>
<keyword id="KW-0878">Amphibian defense peptide</keyword>
<keyword id="KW-0044">Antibiotic</keyword>
<keyword id="KW-0929">Antimicrobial</keyword>
<keyword id="KW-0903">Direct protein sequencing</keyword>
<keyword id="KW-0964">Secreted</keyword>
<sequence length="13" mass="1398">FLSAIASMLGKFL</sequence>
<comment type="function">
    <text evidence="1">Antibacterial activity against Gram-positive bacterium S.aureus (MIC=200 uM). Shows no detectable hemolytic activity towards human erythrocytes.</text>
</comment>
<comment type="subcellular location">
    <subcellularLocation>
        <location evidence="1">Secreted</location>
    </subcellularLocation>
</comment>
<comment type="tissue specificity">
    <text evidence="4">Expressed by the skin glands.</text>
</comment>
<comment type="similarity">
    <text evidence="3">Belongs to the frog skin active peptide (FSAP) family. Temporin subfamily.</text>
</comment>